<dbReference type="EMBL" id="BC071508">
    <property type="protein sequence ID" value="AAH71508.1"/>
    <property type="molecule type" value="mRNA"/>
</dbReference>
<dbReference type="RefSeq" id="NP_001002104.1">
    <property type="nucleotide sequence ID" value="NM_001002104.1"/>
</dbReference>
<dbReference type="SMR" id="Q6IQA2"/>
<dbReference type="FunCoup" id="Q6IQA2">
    <property type="interactions" value="890"/>
</dbReference>
<dbReference type="STRING" id="7955.ENSDARP00000038848"/>
<dbReference type="GlyCosmos" id="Q6IQA2">
    <property type="glycosylation" value="1 site, No reported glycans"/>
</dbReference>
<dbReference type="PaxDb" id="7955-ENSDARP00000038848"/>
<dbReference type="GeneID" id="415194"/>
<dbReference type="KEGG" id="dre:415194"/>
<dbReference type="AGR" id="ZFIN:ZDB-GENE-040625-88"/>
<dbReference type="CTD" id="116068"/>
<dbReference type="ZFIN" id="ZDB-GENE-040625-88">
    <property type="gene designation" value="lysmd3"/>
</dbReference>
<dbReference type="eggNOG" id="KOG2850">
    <property type="taxonomic scope" value="Eukaryota"/>
</dbReference>
<dbReference type="InParanoid" id="Q6IQA2"/>
<dbReference type="OrthoDB" id="538216at2759"/>
<dbReference type="PhylomeDB" id="Q6IQA2"/>
<dbReference type="PRO" id="PR:Q6IQA2"/>
<dbReference type="Proteomes" id="UP000000437">
    <property type="component" value="Chromosome 5"/>
</dbReference>
<dbReference type="GO" id="GO:0005794">
    <property type="term" value="C:Golgi apparatus"/>
    <property type="evidence" value="ECO:0000250"/>
    <property type="project" value="UniProtKB"/>
</dbReference>
<dbReference type="GO" id="GO:0005886">
    <property type="term" value="C:plasma membrane"/>
    <property type="evidence" value="ECO:0000250"/>
    <property type="project" value="UniProtKB"/>
</dbReference>
<dbReference type="GO" id="GO:0007030">
    <property type="term" value="P:Golgi organization"/>
    <property type="evidence" value="ECO:0000250"/>
    <property type="project" value="UniProtKB"/>
</dbReference>
<dbReference type="CDD" id="cd00118">
    <property type="entry name" value="LysM"/>
    <property type="match status" value="1"/>
</dbReference>
<dbReference type="Gene3D" id="3.10.350.10">
    <property type="entry name" value="LysM domain"/>
    <property type="match status" value="1"/>
</dbReference>
<dbReference type="InterPro" id="IPR045030">
    <property type="entry name" value="LYSM1-4"/>
</dbReference>
<dbReference type="InterPro" id="IPR018392">
    <property type="entry name" value="LysM_dom"/>
</dbReference>
<dbReference type="InterPro" id="IPR036779">
    <property type="entry name" value="LysM_dom_sf"/>
</dbReference>
<dbReference type="PANTHER" id="PTHR20932:SF5">
    <property type="entry name" value="AND PUTATIVE PEPTIDOGLYCAN-BINDING DOMAIN-CONTAINING PROTEIN 3-RELATED"/>
    <property type="match status" value="1"/>
</dbReference>
<dbReference type="PANTHER" id="PTHR20932">
    <property type="entry name" value="LYSM AND PUTATIVE PEPTIDOGLYCAN-BINDING DOMAIN-CONTAINING PROTEIN"/>
    <property type="match status" value="1"/>
</dbReference>
<dbReference type="Pfam" id="PF01476">
    <property type="entry name" value="LysM"/>
    <property type="match status" value="1"/>
</dbReference>
<dbReference type="SMART" id="SM00257">
    <property type="entry name" value="LysM"/>
    <property type="match status" value="1"/>
</dbReference>
<dbReference type="SUPFAM" id="SSF54106">
    <property type="entry name" value="LysM domain"/>
    <property type="match status" value="1"/>
</dbReference>
<dbReference type="PROSITE" id="PS51782">
    <property type="entry name" value="LYSM"/>
    <property type="match status" value="1"/>
</dbReference>
<gene>
    <name type="primary">lysmd3</name>
    <name type="ORF">zgc:86877</name>
</gene>
<accession>Q6IQA2</accession>
<name>LYSM3_DANRE</name>
<feature type="chain" id="PRO_0000248010" description="LysM and putative peptidoglycan-binding domain-containing protein 3">
    <location>
        <begin position="1"/>
        <end position="305"/>
    </location>
</feature>
<feature type="topological domain" description="Extracellular" evidence="2">
    <location>
        <begin position="1"/>
        <end position="221"/>
    </location>
</feature>
<feature type="transmembrane region" description="Helical" evidence="2">
    <location>
        <begin position="222"/>
        <end position="242"/>
    </location>
</feature>
<feature type="topological domain" description="Cytoplasmic" evidence="2">
    <location>
        <begin position="243"/>
        <end position="305"/>
    </location>
</feature>
<feature type="domain" description="LysM" evidence="3">
    <location>
        <begin position="68"/>
        <end position="112"/>
    </location>
</feature>
<feature type="region of interest" description="Disordered" evidence="4">
    <location>
        <begin position="31"/>
        <end position="60"/>
    </location>
</feature>
<feature type="region of interest" description="Disordered" evidence="4">
    <location>
        <begin position="121"/>
        <end position="156"/>
    </location>
</feature>
<feature type="compositionally biased region" description="Polar residues" evidence="4">
    <location>
        <begin position="121"/>
        <end position="144"/>
    </location>
</feature>
<feature type="compositionally biased region" description="Low complexity" evidence="4">
    <location>
        <begin position="146"/>
        <end position="156"/>
    </location>
</feature>
<feature type="glycosylation site" description="N-linked (GlcNAc...) asparagine" evidence="2">
    <location>
        <position position="29"/>
    </location>
</feature>
<reference key="1">
    <citation type="submission" date="2004-06" db="EMBL/GenBank/DDBJ databases">
        <authorList>
            <consortium name="NIH - Zebrafish Gene Collection (ZGC) project"/>
        </authorList>
    </citation>
    <scope>NUCLEOTIDE SEQUENCE [LARGE SCALE MRNA]</scope>
    <source>
        <tissue>Embryo</tissue>
    </source>
</reference>
<comment type="function">
    <text evidence="1">Essential for Golgi structural integrity.</text>
</comment>
<comment type="subcellular location">
    <subcellularLocation>
        <location evidence="1">Cell membrane</location>
        <topology evidence="2">Single-pass membrane protein</topology>
    </subcellularLocation>
    <subcellularLocation>
        <location evidence="1">Golgi apparatus</location>
    </subcellularLocation>
</comment>
<evidence type="ECO:0000250" key="1">
    <source>
        <dbReference type="UniProtKB" id="Q7Z3D4"/>
    </source>
</evidence>
<evidence type="ECO:0000255" key="2"/>
<evidence type="ECO:0000255" key="3">
    <source>
        <dbReference type="PROSITE-ProRule" id="PRU01118"/>
    </source>
</evidence>
<evidence type="ECO:0000256" key="4">
    <source>
        <dbReference type="SAM" id="MobiDB-lite"/>
    </source>
</evidence>
<keyword id="KW-1003">Cell membrane</keyword>
<keyword id="KW-0325">Glycoprotein</keyword>
<keyword id="KW-0333">Golgi apparatus</keyword>
<keyword id="KW-0472">Membrane</keyword>
<keyword id="KW-1185">Reference proteome</keyword>
<keyword id="KW-0812">Transmembrane</keyword>
<keyword id="KW-1133">Transmembrane helix</keyword>
<organism>
    <name type="scientific">Danio rerio</name>
    <name type="common">Zebrafish</name>
    <name type="synonym">Brachydanio rerio</name>
    <dbReference type="NCBI Taxonomy" id="7955"/>
    <lineage>
        <taxon>Eukaryota</taxon>
        <taxon>Metazoa</taxon>
        <taxon>Chordata</taxon>
        <taxon>Craniata</taxon>
        <taxon>Vertebrata</taxon>
        <taxon>Euteleostomi</taxon>
        <taxon>Actinopterygii</taxon>
        <taxon>Neopterygii</taxon>
        <taxon>Teleostei</taxon>
        <taxon>Ostariophysi</taxon>
        <taxon>Cypriniformes</taxon>
        <taxon>Danionidae</taxon>
        <taxon>Danioninae</taxon>
        <taxon>Danio</taxon>
    </lineage>
</organism>
<protein>
    <recommendedName>
        <fullName>LysM and putative peptidoglycan-binding domain-containing protein 3</fullName>
    </recommendedName>
</protein>
<proteinExistence type="evidence at transcript level"/>
<sequence length="305" mass="34063">MTGRNQHNGFQFATAVQPATGAYMSAFGNNSETEYSEEDGEAFELRSRGRERHHRSTSRDRKDDIVYLIREIKEGDTLISISLQYFCTVADIKRANNLLTEQDFFALRSLRIPVRKFSSFTETHNTAPHKSSSPSGTCRITETPVSGASLDSTSSSSSADSVECFLQEKDKDIQQLVKSSAPSRNSLSEVVSSLEQPLLGDAERRPAIKKDPYYGADWGMRWWTAVAIMLVVGIVTPVFYLLYYEVLMKADVSHHTTIDSIRPGPTQPAIAEPLVLPQANAAPHQDSHLLPVIEQQHHVKHQEET</sequence>